<proteinExistence type="evidence at protein level"/>
<accession>Q32M88</accession>
<accession>Q658X8</accession>
<accession>Q8TEG9</accession>
<accession>Q9H635</accession>
<protein>
    <recommendedName>
        <fullName evidence="5">Protein-glucosylgalactosylhydroxylysine glucosidase</fullName>
        <ecNumber evidence="3">3.2.1.107</ecNumber>
    </recommendedName>
    <alternativeName>
        <fullName evidence="8">Acid trehalase-like protein 1</fullName>
    </alternativeName>
</protein>
<name>PGGHG_HUMAN</name>
<reference key="1">
    <citation type="journal article" date="2006" name="Nature">
        <title>Human chromosome 11 DNA sequence and analysis including novel gene identification.</title>
        <authorList>
            <person name="Taylor T.D."/>
            <person name="Noguchi H."/>
            <person name="Totoki Y."/>
            <person name="Toyoda A."/>
            <person name="Kuroki Y."/>
            <person name="Dewar K."/>
            <person name="Lloyd C."/>
            <person name="Itoh T."/>
            <person name="Takeda T."/>
            <person name="Kim D.-W."/>
            <person name="She X."/>
            <person name="Barlow K.F."/>
            <person name="Bloom T."/>
            <person name="Bruford E."/>
            <person name="Chang J.L."/>
            <person name="Cuomo C.A."/>
            <person name="Eichler E."/>
            <person name="FitzGerald M.G."/>
            <person name="Jaffe D.B."/>
            <person name="LaButti K."/>
            <person name="Nicol R."/>
            <person name="Park H.-S."/>
            <person name="Seaman C."/>
            <person name="Sougnez C."/>
            <person name="Yang X."/>
            <person name="Zimmer A.R."/>
            <person name="Zody M.C."/>
            <person name="Birren B.W."/>
            <person name="Nusbaum C."/>
            <person name="Fujiyama A."/>
            <person name="Hattori M."/>
            <person name="Rogers J."/>
            <person name="Lander E.S."/>
            <person name="Sakaki Y."/>
        </authorList>
    </citation>
    <scope>NUCLEOTIDE SEQUENCE [LARGE SCALE GENOMIC DNA]</scope>
</reference>
<reference key="2">
    <citation type="journal article" date="2003" name="DNA Res.">
        <title>Characterization of long cDNA clones from human adult spleen. II. The complete sequences of 81 cDNA clones.</title>
        <authorList>
            <person name="Jikuya H."/>
            <person name="Takano J."/>
            <person name="Kikuno R."/>
            <person name="Hirosawa M."/>
            <person name="Nagase T."/>
            <person name="Nomura N."/>
            <person name="Ohara O."/>
        </authorList>
    </citation>
    <scope>NUCLEOTIDE SEQUENCE [LARGE SCALE MRNA] (ISOFORM 2)</scope>
    <source>
        <tissue>Spleen</tissue>
    </source>
</reference>
<reference key="3">
    <citation type="journal article" date="2004" name="Nat. Genet.">
        <title>Complete sequencing and characterization of 21,243 full-length human cDNAs.</title>
        <authorList>
            <person name="Ota T."/>
            <person name="Suzuki Y."/>
            <person name="Nishikawa T."/>
            <person name="Otsuki T."/>
            <person name="Sugiyama T."/>
            <person name="Irie R."/>
            <person name="Wakamatsu A."/>
            <person name="Hayashi K."/>
            <person name="Sato H."/>
            <person name="Nagai K."/>
            <person name="Kimura K."/>
            <person name="Makita H."/>
            <person name="Sekine M."/>
            <person name="Obayashi M."/>
            <person name="Nishi T."/>
            <person name="Shibahara T."/>
            <person name="Tanaka T."/>
            <person name="Ishii S."/>
            <person name="Yamamoto J."/>
            <person name="Saito K."/>
            <person name="Kawai Y."/>
            <person name="Isono Y."/>
            <person name="Nakamura Y."/>
            <person name="Nagahari K."/>
            <person name="Murakami K."/>
            <person name="Yasuda T."/>
            <person name="Iwayanagi T."/>
            <person name="Wagatsuma M."/>
            <person name="Shiratori A."/>
            <person name="Sudo H."/>
            <person name="Hosoiri T."/>
            <person name="Kaku Y."/>
            <person name="Kodaira H."/>
            <person name="Kondo H."/>
            <person name="Sugawara M."/>
            <person name="Takahashi M."/>
            <person name="Kanda K."/>
            <person name="Yokoi T."/>
            <person name="Furuya T."/>
            <person name="Kikkawa E."/>
            <person name="Omura Y."/>
            <person name="Abe K."/>
            <person name="Kamihara K."/>
            <person name="Katsuta N."/>
            <person name="Sato K."/>
            <person name="Tanikawa M."/>
            <person name="Yamazaki M."/>
            <person name="Ninomiya K."/>
            <person name="Ishibashi T."/>
            <person name="Yamashita H."/>
            <person name="Murakawa K."/>
            <person name="Fujimori K."/>
            <person name="Tanai H."/>
            <person name="Kimata M."/>
            <person name="Watanabe M."/>
            <person name="Hiraoka S."/>
            <person name="Chiba Y."/>
            <person name="Ishida S."/>
            <person name="Ono Y."/>
            <person name="Takiguchi S."/>
            <person name="Watanabe S."/>
            <person name="Yosida M."/>
            <person name="Hotuta T."/>
            <person name="Kusano J."/>
            <person name="Kanehori K."/>
            <person name="Takahashi-Fujii A."/>
            <person name="Hara H."/>
            <person name="Tanase T.-O."/>
            <person name="Nomura Y."/>
            <person name="Togiya S."/>
            <person name="Komai F."/>
            <person name="Hara R."/>
            <person name="Takeuchi K."/>
            <person name="Arita M."/>
            <person name="Imose N."/>
            <person name="Musashino K."/>
            <person name="Yuuki H."/>
            <person name="Oshima A."/>
            <person name="Sasaki N."/>
            <person name="Aotsuka S."/>
            <person name="Yoshikawa Y."/>
            <person name="Matsunawa H."/>
            <person name="Ichihara T."/>
            <person name="Shiohata N."/>
            <person name="Sano S."/>
            <person name="Moriya S."/>
            <person name="Momiyama H."/>
            <person name="Satoh N."/>
            <person name="Takami S."/>
            <person name="Terashima Y."/>
            <person name="Suzuki O."/>
            <person name="Nakagawa S."/>
            <person name="Senoh A."/>
            <person name="Mizoguchi H."/>
            <person name="Goto Y."/>
            <person name="Shimizu F."/>
            <person name="Wakebe H."/>
            <person name="Hishigaki H."/>
            <person name="Watanabe T."/>
            <person name="Sugiyama A."/>
            <person name="Takemoto M."/>
            <person name="Kawakami B."/>
            <person name="Yamazaki M."/>
            <person name="Watanabe K."/>
            <person name="Kumagai A."/>
            <person name="Itakura S."/>
            <person name="Fukuzumi Y."/>
            <person name="Fujimori Y."/>
            <person name="Komiyama M."/>
            <person name="Tashiro H."/>
            <person name="Tanigami A."/>
            <person name="Fujiwara T."/>
            <person name="Ono T."/>
            <person name="Yamada K."/>
            <person name="Fujii Y."/>
            <person name="Ozaki K."/>
            <person name="Hirao M."/>
            <person name="Ohmori Y."/>
            <person name="Kawabata A."/>
            <person name="Hikiji T."/>
            <person name="Kobatake N."/>
            <person name="Inagaki H."/>
            <person name="Ikema Y."/>
            <person name="Okamoto S."/>
            <person name="Okitani R."/>
            <person name="Kawakami T."/>
            <person name="Noguchi S."/>
            <person name="Itoh T."/>
            <person name="Shigeta K."/>
            <person name="Senba T."/>
            <person name="Matsumura K."/>
            <person name="Nakajima Y."/>
            <person name="Mizuno T."/>
            <person name="Morinaga M."/>
            <person name="Sasaki M."/>
            <person name="Togashi T."/>
            <person name="Oyama M."/>
            <person name="Hata H."/>
            <person name="Watanabe M."/>
            <person name="Komatsu T."/>
            <person name="Mizushima-Sugano J."/>
            <person name="Satoh T."/>
            <person name="Shirai Y."/>
            <person name="Takahashi Y."/>
            <person name="Nakagawa K."/>
            <person name="Okumura K."/>
            <person name="Nagase T."/>
            <person name="Nomura N."/>
            <person name="Kikuchi H."/>
            <person name="Masuho Y."/>
            <person name="Yamashita R."/>
            <person name="Nakai K."/>
            <person name="Yada T."/>
            <person name="Nakamura Y."/>
            <person name="Ohara O."/>
            <person name="Isogai T."/>
            <person name="Sugano S."/>
        </authorList>
    </citation>
    <scope>NUCLEOTIDE SEQUENCE [LARGE SCALE MRNA] OF 160-500</scope>
    <source>
        <tissue>Small intestine</tissue>
    </source>
</reference>
<reference key="4">
    <citation type="journal article" date="2004" name="Genome Res.">
        <title>The status, quality, and expansion of the NIH full-length cDNA project: the Mammalian Gene Collection (MGC).</title>
        <authorList>
            <consortium name="The MGC Project Team"/>
        </authorList>
    </citation>
    <scope>NUCLEOTIDE SEQUENCE [LARGE SCALE MRNA] OF 163-737</scope>
</reference>
<reference key="5">
    <citation type="journal article" date="2007" name="BMC Genomics">
        <title>The full-ORF clone resource of the German cDNA consortium.</title>
        <authorList>
            <person name="Bechtel S."/>
            <person name="Rosenfelder H."/>
            <person name="Duda A."/>
            <person name="Schmidt C.P."/>
            <person name="Ernst U."/>
            <person name="Wellenreuther R."/>
            <person name="Mehrle A."/>
            <person name="Schuster C."/>
            <person name="Bahr A."/>
            <person name="Bloecker H."/>
            <person name="Heubner D."/>
            <person name="Hoerlein A."/>
            <person name="Michel G."/>
            <person name="Wedler H."/>
            <person name="Koehrer K."/>
            <person name="Ottenwaelder B."/>
            <person name="Poustka A."/>
            <person name="Wiemann S."/>
            <person name="Schupp I."/>
        </authorList>
    </citation>
    <scope>NUCLEOTIDE SEQUENCE [LARGE SCALE MRNA] OF 424-737 (ISOFORM 1)</scope>
    <source>
        <tissue>Stomach</tissue>
    </source>
</reference>
<reference key="6">
    <citation type="journal article" date="2014" name="J. Proteomics">
        <title>An enzyme assisted RP-RPLC approach for in-depth analysis of human liver phosphoproteome.</title>
        <authorList>
            <person name="Bian Y."/>
            <person name="Song C."/>
            <person name="Cheng K."/>
            <person name="Dong M."/>
            <person name="Wang F."/>
            <person name="Huang J."/>
            <person name="Sun D."/>
            <person name="Wang L."/>
            <person name="Ye M."/>
            <person name="Zou H."/>
        </authorList>
    </citation>
    <scope>IDENTIFICATION BY MASS SPECTROMETRY [LARGE SCALE ANALYSIS]</scope>
    <source>
        <tissue>Liver</tissue>
    </source>
</reference>
<reference key="7">
    <citation type="journal article" date="2016" name="Biochem. Biophys. Res. Commun.">
        <title>Catalytic site of human protein-glucosylgalactosylhydroxylysine glucosidase: Three crucial carboxyl residues were determined by cloning and site-directed mutagenesis.</title>
        <authorList>
            <person name="Hamazaki H."/>
            <person name="Hamazaki M.H."/>
        </authorList>
    </citation>
    <scope>FUNCTION</scope>
    <scope>CATALYTIC ACTIVITY</scope>
    <scope>ACTIVE SITE</scope>
    <scope>MUTAGENESIS OF ASP-301; ASP-429; GLU-430 AND GLU-574</scope>
</reference>
<organism>
    <name type="scientific">Homo sapiens</name>
    <name type="common">Human</name>
    <dbReference type="NCBI Taxonomy" id="9606"/>
    <lineage>
        <taxon>Eukaryota</taxon>
        <taxon>Metazoa</taxon>
        <taxon>Chordata</taxon>
        <taxon>Craniata</taxon>
        <taxon>Vertebrata</taxon>
        <taxon>Euteleostomi</taxon>
        <taxon>Mammalia</taxon>
        <taxon>Eutheria</taxon>
        <taxon>Euarchontoglires</taxon>
        <taxon>Primates</taxon>
        <taxon>Haplorrhini</taxon>
        <taxon>Catarrhini</taxon>
        <taxon>Hominidae</taxon>
        <taxon>Homo</taxon>
    </lineage>
</organism>
<comment type="function">
    <text evidence="3">Catalyzes the hydrolysis of glucose from the disaccharide unit linked to hydroxylysine residues of collagen and collagen-like proteins.</text>
</comment>
<comment type="catalytic activity">
    <reaction evidence="3">
        <text>(5R)-5-O-[alpha-D-glucosyl-(1-&gt;2)-beta-D-galactosyl]-5-hydroxy-L-lysyl-[collagen] + H2O = (5R)-5-O-(beta-D-galactosyl)-5-hydroxy-L-lysyl-[collagen] + D-glucose</text>
        <dbReference type="Rhea" id="RHEA:11068"/>
        <dbReference type="Rhea" id="RHEA-COMP:12753"/>
        <dbReference type="Rhea" id="RHEA-COMP:12754"/>
        <dbReference type="ChEBI" id="CHEBI:4167"/>
        <dbReference type="ChEBI" id="CHEBI:15377"/>
        <dbReference type="ChEBI" id="CHEBI:133443"/>
        <dbReference type="ChEBI" id="CHEBI:133452"/>
        <dbReference type="EC" id="3.2.1.107"/>
    </reaction>
</comment>
<comment type="alternative products">
    <event type="alternative splicing"/>
    <isoform>
        <id>Q32M88-1</id>
        <name>1</name>
        <sequence type="displayed"/>
    </isoform>
    <isoform>
        <id>Q32M88-2</id>
        <name>2</name>
        <sequence type="described" ref="VSP_032895 VSP_032896"/>
    </isoform>
</comment>
<comment type="similarity">
    <text evidence="6">Belongs to the glycosyl hydrolase 65 family.</text>
</comment>
<comment type="sequence caution" evidence="6">
    <conflict type="erroneous initiation">
        <sequence resource="EMBL-CDS" id="AAI09258"/>
    </conflict>
    <text>Truncated N-terminus.</text>
</comment>
<comment type="sequence caution" evidence="6">
    <conflict type="erroneous initiation">
        <sequence resource="EMBL-CDS" id="AAI09259"/>
    </conflict>
    <text>Truncated N-terminus.</text>
</comment>
<comment type="sequence caution" evidence="6">
    <conflict type="erroneous initiation">
        <sequence resource="EMBL-CDS" id="BAB15431"/>
    </conflict>
    <text>Truncated N-terminus.</text>
</comment>
<comment type="sequence caution" evidence="6">
    <conflict type="erroneous initiation">
        <sequence resource="EMBL-CDS" id="BAB84981"/>
    </conflict>
    <text>Extended N-terminus.</text>
</comment>
<sequence>MEDAGEDPTTFAAHSLPSDPRLLATVTNAYLGTRVFHDTLHVSGVYNGAGGDTHRAMLPSPLNVRLEAPAGMGEQLTETFALDTNTGSFLHTLEGPRFRASQCIYAHRTLPHVLAFRVSIARLAPGSGPITLLLRSAFSPESPDLDLHQGPDFQGARYLYGHTLTPEQPGGPQQEVHMLWTPAPPDLTLGEGEEARTWDFLTAVGGSQAEAQACLTEALQLQARGALYTAHAQAWAQLWVECGLDVVGPLQLRQALRGSLYYLLSALPQPKAPGYICHGLSPGGLSNGSREECYWGHVFWDQDLWMFPSILMFHPEAARAILEYRIRTLDGALENAQNLGYQGAKFAWESADSGLEVCPEDIYGVQEVHVNGAVVLAFELYYHTTQDLQLFREAGGWDVVRAVAEFWCSRVEWSPREEKYHLRGVMSPDEYHSGVNNSVYTNVLVQNSLRFAAALAQDLGLPIPSQWLAVADKIKVPFDVEQNFHPEFDGYEPGEVVKQADVVLLGYPVPFSLSPDVRRKNLEIYEAVTSPQGPAMTWSMFAVGWMELKDAVRARGLLDRSFANMAEPFKVWTENADGSGAVNFLTGMGGFLQAVVFGCTGFRVTRAGVTFDPVCLSGISRVSVSGIFYQGNKLNFSFSEDSVTVEVTARAGPWAPHLEAELWPSQSRLSLLPGHKVSFPRSAGRIQMSPPKLPGSSSSEFPGRTFSDVRDPLQSPLWVTLGSSSPTESLTVDPASE</sequence>
<keyword id="KW-0025">Alternative splicing</keyword>
<keyword id="KW-0326">Glycosidase</keyword>
<keyword id="KW-0378">Hydrolase</keyword>
<keyword id="KW-1267">Proteomics identification</keyword>
<keyword id="KW-1185">Reference proteome</keyword>
<feature type="chain" id="PRO_0000329004" description="Protein-glucosylgalactosylhydroxylysine glucosidase">
    <location>
        <begin position="1"/>
        <end position="737"/>
    </location>
</feature>
<feature type="region of interest" description="Disordered" evidence="2">
    <location>
        <begin position="681"/>
        <end position="737"/>
    </location>
</feature>
<feature type="compositionally biased region" description="Polar residues" evidence="2">
    <location>
        <begin position="721"/>
        <end position="730"/>
    </location>
</feature>
<feature type="active site" description="Proton donor" evidence="7">
    <location>
        <position position="430"/>
    </location>
</feature>
<feature type="binding site" evidence="7">
    <location>
        <begin position="300"/>
        <end position="301"/>
    </location>
    <ligand>
        <name>substrate</name>
    </ligand>
</feature>
<feature type="binding site" evidence="1">
    <location>
        <begin position="498"/>
        <end position="499"/>
    </location>
    <ligand>
        <name>substrate</name>
    </ligand>
</feature>
<feature type="splice variant" id="VSP_032895" description="In isoform 2." evidence="4">
    <original>DLWMFPSILMFHPEAARAILEYRIRTLDGALENAQNLGYQGAKFAWESADSG</original>
    <variation>VSTVHPAPATQQATHGGPRSLPSLGPGLWLGKHRDCGKREEAWKVCRSLVEE</variation>
    <location>
        <begin position="303"/>
        <end position="354"/>
    </location>
</feature>
<feature type="splice variant" id="VSP_032896" description="In isoform 2." evidence="4">
    <location>
        <begin position="355"/>
        <end position="737"/>
    </location>
</feature>
<feature type="mutagenesis site" description="Abolishes catalytic activity." evidence="3">
    <original>D</original>
    <variation>E</variation>
    <variation>N</variation>
    <location>
        <position position="301"/>
    </location>
</feature>
<feature type="mutagenesis site" description="Abolishes catalytic activity." evidence="3">
    <original>D</original>
    <variation>E</variation>
    <location>
        <position position="429"/>
    </location>
</feature>
<feature type="mutagenesis site" description="Significantly impairs catalytic activity." evidence="3">
    <original>D</original>
    <variation>N</variation>
    <location>
        <position position="429"/>
    </location>
</feature>
<feature type="mutagenesis site" description="Abolishes catalytic activity." evidence="3">
    <original>E</original>
    <variation>D</variation>
    <variation>Q</variation>
    <location>
        <position position="430"/>
    </location>
</feature>
<feature type="mutagenesis site" description="Abolishes catalytic activity." evidence="3">
    <original>E</original>
    <variation>D</variation>
    <variation>Q</variation>
    <location>
        <position position="574"/>
    </location>
</feature>
<feature type="sequence conflict" description="In Ref. 3; BAB15431." evidence="6" ref="3">
    <original>EFDGYEPGEVVKQA</original>
    <variation>KFQLRVPWEDFFRC</variation>
    <location>
        <begin position="487"/>
        <end position="500"/>
    </location>
</feature>
<evidence type="ECO:0000250" key="1">
    <source>
        <dbReference type="UniProtKB" id="D6XZ22"/>
    </source>
</evidence>
<evidence type="ECO:0000256" key="2">
    <source>
        <dbReference type="SAM" id="MobiDB-lite"/>
    </source>
</evidence>
<evidence type="ECO:0000269" key="3">
    <source>
    </source>
</evidence>
<evidence type="ECO:0000303" key="4">
    <source>
    </source>
</evidence>
<evidence type="ECO:0000303" key="5">
    <source>
    </source>
</evidence>
<evidence type="ECO:0000305" key="6"/>
<evidence type="ECO:0000305" key="7">
    <source>
    </source>
</evidence>
<evidence type="ECO:0000312" key="8">
    <source>
        <dbReference type="HGNC" id="HGNC:26210"/>
    </source>
</evidence>
<dbReference type="EC" id="3.2.1.107" evidence="3"/>
<dbReference type="EMBL" id="AC136475">
    <property type="status" value="NOT_ANNOTATED_CDS"/>
    <property type="molecule type" value="Genomic_DNA"/>
</dbReference>
<dbReference type="EMBL" id="AK074155">
    <property type="protein sequence ID" value="BAB84981.1"/>
    <property type="status" value="ALT_INIT"/>
    <property type="molecule type" value="mRNA"/>
</dbReference>
<dbReference type="EMBL" id="AK026288">
    <property type="protein sequence ID" value="BAB15431.1"/>
    <property type="status" value="ALT_INIT"/>
    <property type="molecule type" value="mRNA"/>
</dbReference>
<dbReference type="EMBL" id="BC109257">
    <property type="protein sequence ID" value="AAI09258.1"/>
    <property type="status" value="ALT_INIT"/>
    <property type="molecule type" value="mRNA"/>
</dbReference>
<dbReference type="EMBL" id="BC109258">
    <property type="protein sequence ID" value="AAI09259.1"/>
    <property type="status" value="ALT_INIT"/>
    <property type="molecule type" value="mRNA"/>
</dbReference>
<dbReference type="EMBL" id="AL832932">
    <property type="protein sequence ID" value="CAH56316.1"/>
    <property type="molecule type" value="mRNA"/>
</dbReference>
<dbReference type="CCDS" id="CCDS31322.2">
    <molecule id="Q32M88-1"/>
</dbReference>
<dbReference type="RefSeq" id="NP_079368.3">
    <molecule id="Q32M88-1"/>
    <property type="nucleotide sequence ID" value="NM_025092.5"/>
</dbReference>
<dbReference type="RefSeq" id="XP_011518685.1">
    <property type="nucleotide sequence ID" value="XM_011520383.2"/>
</dbReference>
<dbReference type="RefSeq" id="XP_016873844.1">
    <molecule id="Q32M88-1"/>
    <property type="nucleotide sequence ID" value="XM_017018355.2"/>
</dbReference>
<dbReference type="RefSeq" id="XP_054226004.1">
    <molecule id="Q32M88-1"/>
    <property type="nucleotide sequence ID" value="XM_054370029.1"/>
</dbReference>
<dbReference type="RefSeq" id="XP_054226005.1">
    <molecule id="Q32M88-1"/>
    <property type="nucleotide sequence ID" value="XM_054370030.1"/>
</dbReference>
<dbReference type="SMR" id="Q32M88"/>
<dbReference type="BioGRID" id="123150">
    <property type="interactions" value="5"/>
</dbReference>
<dbReference type="FunCoup" id="Q32M88">
    <property type="interactions" value="517"/>
</dbReference>
<dbReference type="STRING" id="9606.ENSP00000387185"/>
<dbReference type="CAZy" id="GH65">
    <property type="family name" value="Glycoside Hydrolase Family 65"/>
</dbReference>
<dbReference type="GlyGen" id="Q32M88">
    <property type="glycosylation" value="1 site, 1 N-linked glycan (1 site)"/>
</dbReference>
<dbReference type="iPTMnet" id="Q32M88"/>
<dbReference type="PhosphoSitePlus" id="Q32M88"/>
<dbReference type="BioMuta" id="PGGHG"/>
<dbReference type="DMDM" id="182627595"/>
<dbReference type="jPOST" id="Q32M88"/>
<dbReference type="MassIVE" id="Q32M88"/>
<dbReference type="PaxDb" id="9606-ENSP00000387185"/>
<dbReference type="PeptideAtlas" id="Q32M88"/>
<dbReference type="ProteomicsDB" id="61596">
    <molecule id="Q32M88-1"/>
</dbReference>
<dbReference type="ProteomicsDB" id="61597">
    <molecule id="Q32M88-2"/>
</dbReference>
<dbReference type="Pumba" id="Q32M88"/>
<dbReference type="Antibodypedia" id="48910">
    <property type="antibodies" value="22 antibodies from 14 providers"/>
</dbReference>
<dbReference type="DNASU" id="80162"/>
<dbReference type="Ensembl" id="ENST00000409548.7">
    <molecule id="Q32M88-1"/>
    <property type="protein sequence ID" value="ENSP00000387185.2"/>
    <property type="gene ID" value="ENSG00000142102.16"/>
</dbReference>
<dbReference type="GeneID" id="80162"/>
<dbReference type="KEGG" id="hsa:80162"/>
<dbReference type="MANE-Select" id="ENST00000409548.7">
    <property type="protein sequence ID" value="ENSP00000387185.2"/>
    <property type="RefSeq nucleotide sequence ID" value="NM_025092.5"/>
    <property type="RefSeq protein sequence ID" value="NP_079368.3"/>
</dbReference>
<dbReference type="UCSC" id="uc010qvu.3">
    <molecule id="Q32M88-1"/>
    <property type="organism name" value="human"/>
</dbReference>
<dbReference type="AGR" id="HGNC:26210"/>
<dbReference type="CTD" id="80162"/>
<dbReference type="DisGeNET" id="80162"/>
<dbReference type="GeneCards" id="PGGHG"/>
<dbReference type="HGNC" id="HGNC:26210">
    <property type="gene designation" value="PGGHG"/>
</dbReference>
<dbReference type="HPA" id="ENSG00000142102">
    <property type="expression patterns" value="Tissue enriched (pancreas)"/>
</dbReference>
<dbReference type="MalaCards" id="PGGHG"/>
<dbReference type="neXtProt" id="NX_Q32M88"/>
<dbReference type="OpenTargets" id="ENSG00000142102"/>
<dbReference type="PharmGKB" id="PA142672576"/>
<dbReference type="VEuPathDB" id="HostDB:ENSG00000142102"/>
<dbReference type="eggNOG" id="KOG4125">
    <property type="taxonomic scope" value="Eukaryota"/>
</dbReference>
<dbReference type="GeneTree" id="ENSGT00390000006297"/>
<dbReference type="HOGENOM" id="CLU_006285_4_2_1"/>
<dbReference type="InParanoid" id="Q32M88"/>
<dbReference type="OrthoDB" id="200349at2759"/>
<dbReference type="PAN-GO" id="Q32M88">
    <property type="GO annotations" value="3 GO annotations based on evolutionary models"/>
</dbReference>
<dbReference type="PhylomeDB" id="Q32M88"/>
<dbReference type="TreeFam" id="TF300109"/>
<dbReference type="BioCyc" id="MetaCyc:ENSG00000142102-MONOMER"/>
<dbReference type="PathwayCommons" id="Q32M88"/>
<dbReference type="BioGRID-ORCS" id="80162">
    <property type="hits" value="6 hits in 1153 CRISPR screens"/>
</dbReference>
<dbReference type="ChiTaRS" id="PGGHG">
    <property type="organism name" value="human"/>
</dbReference>
<dbReference type="GenomeRNAi" id="80162"/>
<dbReference type="Pharos" id="Q32M88">
    <property type="development level" value="Tbio"/>
</dbReference>
<dbReference type="PRO" id="PR:Q32M88"/>
<dbReference type="Proteomes" id="UP000005640">
    <property type="component" value="Chromosome 11"/>
</dbReference>
<dbReference type="RNAct" id="Q32M88">
    <property type="molecule type" value="protein"/>
</dbReference>
<dbReference type="Bgee" id="ENSG00000142102">
    <property type="expression patterns" value="Expressed in body of pancreas and 161 other cell types or tissues"/>
</dbReference>
<dbReference type="ExpressionAtlas" id="Q32M88">
    <property type="expression patterns" value="baseline and differential"/>
</dbReference>
<dbReference type="GO" id="GO:0005829">
    <property type="term" value="C:cytosol"/>
    <property type="evidence" value="ECO:0000314"/>
    <property type="project" value="HPA"/>
</dbReference>
<dbReference type="GO" id="GO:0047402">
    <property type="term" value="F:protein-glucosylgalactosylhydroxylysine glucosidase activity"/>
    <property type="evidence" value="ECO:0000314"/>
    <property type="project" value="UniProtKB"/>
</dbReference>
<dbReference type="GO" id="GO:0005975">
    <property type="term" value="P:carbohydrate metabolic process"/>
    <property type="evidence" value="ECO:0000314"/>
    <property type="project" value="UniProtKB"/>
</dbReference>
<dbReference type="FunFam" id="1.50.10.10:FF:000023">
    <property type="entry name" value="Protein-glucosylgalactosylhydroxylysine glucosidase"/>
    <property type="match status" value="1"/>
</dbReference>
<dbReference type="FunFam" id="2.60.420.10:FF:000002">
    <property type="entry name" value="Protein-glucosylgalactosylhydroxylysine glucosidase"/>
    <property type="match status" value="1"/>
</dbReference>
<dbReference type="Gene3D" id="1.50.10.10">
    <property type="match status" value="1"/>
</dbReference>
<dbReference type="Gene3D" id="2.60.420.10">
    <property type="entry name" value="Maltose phosphorylase, domain 3"/>
    <property type="match status" value="1"/>
</dbReference>
<dbReference type="InterPro" id="IPR008928">
    <property type="entry name" value="6-hairpin_glycosidase_sf"/>
</dbReference>
<dbReference type="InterPro" id="IPR012341">
    <property type="entry name" value="6hp_glycosidase-like_sf"/>
</dbReference>
<dbReference type="InterPro" id="IPR005195">
    <property type="entry name" value="Glyco_hydro_65_M"/>
</dbReference>
<dbReference type="PANTHER" id="PTHR11051">
    <property type="entry name" value="GLYCOSYL HYDROLASE-RELATED"/>
    <property type="match status" value="1"/>
</dbReference>
<dbReference type="PANTHER" id="PTHR11051:SF8">
    <property type="entry name" value="PROTEIN-GLUCOSYLGALACTOSYLHYDROXYLYSINE GLUCOSIDASE"/>
    <property type="match status" value="1"/>
</dbReference>
<dbReference type="Pfam" id="PF03632">
    <property type="entry name" value="Glyco_hydro_65m"/>
    <property type="match status" value="1"/>
</dbReference>
<dbReference type="SUPFAM" id="SSF48208">
    <property type="entry name" value="Six-hairpin glycosidases"/>
    <property type="match status" value="1"/>
</dbReference>
<gene>
    <name evidence="5 8" type="primary">PGGHG</name>
    <name evidence="8" type="synonym">ATHL1</name>
</gene>